<dbReference type="EMBL" id="CP000733">
    <property type="protein sequence ID" value="ABS76590.2"/>
    <property type="status" value="ALT_INIT"/>
    <property type="molecule type" value="Genomic_DNA"/>
</dbReference>
<dbReference type="RefSeq" id="WP_011996955.1">
    <property type="nucleotide sequence ID" value="NC_009727.1"/>
</dbReference>
<dbReference type="SMR" id="A9KE32"/>
<dbReference type="KEGG" id="cbd:CBUD_1186"/>
<dbReference type="HOGENOM" id="CLU_004131_4_2_6"/>
<dbReference type="Proteomes" id="UP000008555">
    <property type="component" value="Chromosome"/>
</dbReference>
<dbReference type="GO" id="GO:0032300">
    <property type="term" value="C:mismatch repair complex"/>
    <property type="evidence" value="ECO:0007669"/>
    <property type="project" value="InterPro"/>
</dbReference>
<dbReference type="GO" id="GO:0005524">
    <property type="term" value="F:ATP binding"/>
    <property type="evidence" value="ECO:0007669"/>
    <property type="project" value="InterPro"/>
</dbReference>
<dbReference type="GO" id="GO:0016887">
    <property type="term" value="F:ATP hydrolysis activity"/>
    <property type="evidence" value="ECO:0007669"/>
    <property type="project" value="InterPro"/>
</dbReference>
<dbReference type="GO" id="GO:0140664">
    <property type="term" value="F:ATP-dependent DNA damage sensor activity"/>
    <property type="evidence" value="ECO:0007669"/>
    <property type="project" value="InterPro"/>
</dbReference>
<dbReference type="GO" id="GO:0030983">
    <property type="term" value="F:mismatched DNA binding"/>
    <property type="evidence" value="ECO:0007669"/>
    <property type="project" value="InterPro"/>
</dbReference>
<dbReference type="GO" id="GO:0006298">
    <property type="term" value="P:mismatch repair"/>
    <property type="evidence" value="ECO:0007669"/>
    <property type="project" value="UniProtKB-UniRule"/>
</dbReference>
<dbReference type="CDD" id="cd16926">
    <property type="entry name" value="HATPase_MutL-MLH-PMS-like"/>
    <property type="match status" value="1"/>
</dbReference>
<dbReference type="CDD" id="cd03482">
    <property type="entry name" value="MutL_Trans_MutL"/>
    <property type="match status" value="1"/>
</dbReference>
<dbReference type="FunFam" id="3.30.230.10:FF:000013">
    <property type="entry name" value="DNA mismatch repair endonuclease MutL"/>
    <property type="match status" value="1"/>
</dbReference>
<dbReference type="FunFam" id="3.30.565.10:FF:000003">
    <property type="entry name" value="DNA mismatch repair endonuclease MutL"/>
    <property type="match status" value="1"/>
</dbReference>
<dbReference type="Gene3D" id="3.30.230.10">
    <property type="match status" value="1"/>
</dbReference>
<dbReference type="Gene3D" id="3.30.565.10">
    <property type="entry name" value="Histidine kinase-like ATPase, C-terminal domain"/>
    <property type="match status" value="1"/>
</dbReference>
<dbReference type="Gene3D" id="3.30.1540.20">
    <property type="entry name" value="MutL, C-terminal domain, dimerisation subdomain"/>
    <property type="match status" value="1"/>
</dbReference>
<dbReference type="Gene3D" id="3.30.1370.100">
    <property type="entry name" value="MutL, C-terminal domain, regulatory subdomain"/>
    <property type="match status" value="1"/>
</dbReference>
<dbReference type="HAMAP" id="MF_00149">
    <property type="entry name" value="DNA_mis_repair"/>
    <property type="match status" value="1"/>
</dbReference>
<dbReference type="InterPro" id="IPR014762">
    <property type="entry name" value="DNA_mismatch_repair_CS"/>
</dbReference>
<dbReference type="InterPro" id="IPR020667">
    <property type="entry name" value="DNA_mismatch_repair_MutL"/>
</dbReference>
<dbReference type="InterPro" id="IPR013507">
    <property type="entry name" value="DNA_mismatch_S5_2-like"/>
</dbReference>
<dbReference type="InterPro" id="IPR036890">
    <property type="entry name" value="HATPase_C_sf"/>
</dbReference>
<dbReference type="InterPro" id="IPR002099">
    <property type="entry name" value="MutL/Mlh/PMS"/>
</dbReference>
<dbReference type="InterPro" id="IPR038973">
    <property type="entry name" value="MutL/Mlh/Pms-like"/>
</dbReference>
<dbReference type="InterPro" id="IPR014790">
    <property type="entry name" value="MutL_C"/>
</dbReference>
<dbReference type="InterPro" id="IPR042120">
    <property type="entry name" value="MutL_C_dimsub"/>
</dbReference>
<dbReference type="InterPro" id="IPR042121">
    <property type="entry name" value="MutL_C_regsub"/>
</dbReference>
<dbReference type="InterPro" id="IPR037198">
    <property type="entry name" value="MutL_C_sf"/>
</dbReference>
<dbReference type="InterPro" id="IPR020568">
    <property type="entry name" value="Ribosomal_Su5_D2-typ_SF"/>
</dbReference>
<dbReference type="InterPro" id="IPR014721">
    <property type="entry name" value="Ribsml_uS5_D2-typ_fold_subgr"/>
</dbReference>
<dbReference type="NCBIfam" id="TIGR00585">
    <property type="entry name" value="mutl"/>
    <property type="match status" value="1"/>
</dbReference>
<dbReference type="PANTHER" id="PTHR10073">
    <property type="entry name" value="DNA MISMATCH REPAIR PROTEIN MLH, PMS, MUTL"/>
    <property type="match status" value="1"/>
</dbReference>
<dbReference type="PANTHER" id="PTHR10073:SF12">
    <property type="entry name" value="DNA MISMATCH REPAIR PROTEIN MLH1"/>
    <property type="match status" value="1"/>
</dbReference>
<dbReference type="Pfam" id="PF01119">
    <property type="entry name" value="DNA_mis_repair"/>
    <property type="match status" value="1"/>
</dbReference>
<dbReference type="Pfam" id="PF13589">
    <property type="entry name" value="HATPase_c_3"/>
    <property type="match status" value="1"/>
</dbReference>
<dbReference type="Pfam" id="PF08676">
    <property type="entry name" value="MutL_C"/>
    <property type="match status" value="1"/>
</dbReference>
<dbReference type="SMART" id="SM01340">
    <property type="entry name" value="DNA_mis_repair"/>
    <property type="match status" value="1"/>
</dbReference>
<dbReference type="SMART" id="SM00853">
    <property type="entry name" value="MutL_C"/>
    <property type="match status" value="1"/>
</dbReference>
<dbReference type="SUPFAM" id="SSF55874">
    <property type="entry name" value="ATPase domain of HSP90 chaperone/DNA topoisomerase II/histidine kinase"/>
    <property type="match status" value="1"/>
</dbReference>
<dbReference type="SUPFAM" id="SSF118116">
    <property type="entry name" value="DNA mismatch repair protein MutL"/>
    <property type="match status" value="1"/>
</dbReference>
<dbReference type="SUPFAM" id="SSF54211">
    <property type="entry name" value="Ribosomal protein S5 domain 2-like"/>
    <property type="match status" value="1"/>
</dbReference>
<dbReference type="PROSITE" id="PS00058">
    <property type="entry name" value="DNA_MISMATCH_REPAIR_1"/>
    <property type="match status" value="1"/>
</dbReference>
<accession>A9KE32</accession>
<reference key="1">
    <citation type="journal article" date="2009" name="Infect. Immun.">
        <title>Comparative genomics reveal extensive transposon-mediated genomic plasticity and diversity among potential effector proteins within the genus Coxiella.</title>
        <authorList>
            <person name="Beare P.A."/>
            <person name="Unsworth N."/>
            <person name="Andoh M."/>
            <person name="Voth D.E."/>
            <person name="Omsland A."/>
            <person name="Gilk S.D."/>
            <person name="Williams K.P."/>
            <person name="Sobral B.W."/>
            <person name="Kupko J.J. III"/>
            <person name="Porcella S.F."/>
            <person name="Samuel J.E."/>
            <person name="Heinzen R.A."/>
        </authorList>
    </citation>
    <scope>NUCLEOTIDE SEQUENCE [LARGE SCALE GENOMIC DNA]</scope>
    <source>
        <strain>Dugway 5J108-111</strain>
    </source>
</reference>
<sequence length="574" mass="64572">MYIRRLNDQTANQIAAGEVVERPASVVKELIENSIDAHASCIRVDILQGGAKQIRIQDDGDGIHPEDLVLALERHATSKIAKIDDLQDITTLGFRGEALASISAVSRLTLTSRQKNAEMGYRISNISHKIMTPVPAAHPQGTTIDVQDLFYNTPARRKFLRSPATEFQHIRRIIERLALSHFTTEFLLHHNEKEIIHFKSATTISGQENRIKSILGDVFMQSALAIEFSQSGLTLKGYIAEAAYTRSQPDLQYIYVNGRFVRDKLIAQALRQAYHDVLFHGRHPAYVLYLEIDPAFVDINVHPTKHEVRFRDPQWVRDFLIHAVKTALAQAKPGIAHPLPQSTAEYNPITNFAPTPLIEGQGNLSLIQEQPAPYTQTIVHKHPLGHALAQLQGIYILSQNEKGLVIVDMHAAHERILYEKMKKQLAEVGLAMQSLLVPINLSLNPQEITAWQTNKALFARLGFEIESFGPDKIVVRRHPSLLKPKNLENLIRDVLADLITHNTTSRVGERINAALATLACHAALRAPHYLTIEEMEALLREMEKTEHGGLCNHGRPTWKQFDIAELDTFFLRGQ</sequence>
<name>MUTL_COXBN</name>
<evidence type="ECO:0000255" key="1">
    <source>
        <dbReference type="HAMAP-Rule" id="MF_00149"/>
    </source>
</evidence>
<evidence type="ECO:0000305" key="2"/>
<organism>
    <name type="scientific">Coxiella burnetii (strain Dugway 5J108-111)</name>
    <dbReference type="NCBI Taxonomy" id="434922"/>
    <lineage>
        <taxon>Bacteria</taxon>
        <taxon>Pseudomonadati</taxon>
        <taxon>Pseudomonadota</taxon>
        <taxon>Gammaproteobacteria</taxon>
        <taxon>Legionellales</taxon>
        <taxon>Coxiellaceae</taxon>
        <taxon>Coxiella</taxon>
    </lineage>
</organism>
<comment type="function">
    <text evidence="1">This protein is involved in the repair of mismatches in DNA. It is required for dam-dependent methyl-directed DNA mismatch repair. May act as a 'molecular matchmaker', a protein that promotes the formation of a stable complex between two or more DNA-binding proteins in an ATP-dependent manner without itself being part of a final effector complex.</text>
</comment>
<comment type="similarity">
    <text evidence="1">Belongs to the DNA mismatch repair MutL/HexB family.</text>
</comment>
<comment type="sequence caution" evidence="2">
    <conflict type="erroneous initiation">
        <sequence resource="EMBL-CDS" id="ABS76590"/>
    </conflict>
</comment>
<protein>
    <recommendedName>
        <fullName evidence="1">DNA mismatch repair protein MutL</fullName>
    </recommendedName>
</protein>
<gene>
    <name evidence="1" type="primary">mutL</name>
    <name type="ordered locus">CBUD_1186</name>
</gene>
<proteinExistence type="inferred from homology"/>
<keyword id="KW-0227">DNA damage</keyword>
<keyword id="KW-0234">DNA repair</keyword>
<feature type="chain" id="PRO_1000076694" description="DNA mismatch repair protein MutL">
    <location>
        <begin position="1"/>
        <end position="574"/>
    </location>
</feature>